<evidence type="ECO:0000255" key="1">
    <source>
        <dbReference type="HAMAP-Rule" id="MF_01208"/>
    </source>
</evidence>
<keyword id="KW-0328">Glycosyltransferase</keyword>
<keyword id="KW-0460">Magnesium</keyword>
<keyword id="KW-0665">Pyrimidine biosynthesis</keyword>
<keyword id="KW-0808">Transferase</keyword>
<protein>
    <recommendedName>
        <fullName evidence="1">Orotate phosphoribosyltransferase</fullName>
        <shortName evidence="1">OPRT</shortName>
        <shortName evidence="1">OPRTase</shortName>
        <ecNumber evidence="1">2.4.2.10</ecNumber>
    </recommendedName>
</protein>
<gene>
    <name evidence="1" type="primary">pyrE</name>
    <name type="ordered locus">BR0653</name>
    <name type="ordered locus">BS1330_I0649</name>
</gene>
<sequence>MNTDDVLAVFREAGAILEGHFILTSGLRSPVFLQKARVFMHADKTEKLCKALAEKIRAADLGPIDYVVGPAIGGLIPSYETSRHLGVPSVWVERENGVFRLRRFDVPKGARVVIVEDIVTTGLSIRETIDCMKDLGIEVVAAACIVDRSAGKADVGTRLISLAEYEVPAYPADKLPPELAAIPAVKPGSRNI</sequence>
<accession>P65911</accession>
<accession>G0K7Z4</accession>
<accession>Q8YG66</accession>
<proteinExistence type="inferred from homology"/>
<reference key="1">
    <citation type="journal article" date="2002" name="Proc. Natl. Acad. Sci. U.S.A.">
        <title>The Brucella suis genome reveals fundamental similarities between animal and plant pathogens and symbionts.</title>
        <authorList>
            <person name="Paulsen I.T."/>
            <person name="Seshadri R."/>
            <person name="Nelson K.E."/>
            <person name="Eisen J.A."/>
            <person name="Heidelberg J.F."/>
            <person name="Read T.D."/>
            <person name="Dodson R.J."/>
            <person name="Umayam L.A."/>
            <person name="Brinkac L.M."/>
            <person name="Beanan M.J."/>
            <person name="Daugherty S.C."/>
            <person name="DeBoy R.T."/>
            <person name="Durkin A.S."/>
            <person name="Kolonay J.F."/>
            <person name="Madupu R."/>
            <person name="Nelson W.C."/>
            <person name="Ayodeji B."/>
            <person name="Kraul M."/>
            <person name="Shetty J."/>
            <person name="Malek J.A."/>
            <person name="Van Aken S.E."/>
            <person name="Riedmuller S."/>
            <person name="Tettelin H."/>
            <person name="Gill S.R."/>
            <person name="White O."/>
            <person name="Salzberg S.L."/>
            <person name="Hoover D.L."/>
            <person name="Lindler L.E."/>
            <person name="Halling S.M."/>
            <person name="Boyle S.M."/>
            <person name="Fraser C.M."/>
        </authorList>
    </citation>
    <scope>NUCLEOTIDE SEQUENCE [LARGE SCALE GENOMIC DNA]</scope>
    <source>
        <strain>1330</strain>
    </source>
</reference>
<reference key="2">
    <citation type="journal article" date="2011" name="J. Bacteriol.">
        <title>Revised genome sequence of Brucella suis 1330.</title>
        <authorList>
            <person name="Tae H."/>
            <person name="Shallom S."/>
            <person name="Settlage R."/>
            <person name="Preston D."/>
            <person name="Adams L.G."/>
            <person name="Garner H.R."/>
        </authorList>
    </citation>
    <scope>NUCLEOTIDE SEQUENCE [LARGE SCALE GENOMIC DNA]</scope>
    <source>
        <strain>1330</strain>
    </source>
</reference>
<organism>
    <name type="scientific">Brucella suis biovar 1 (strain 1330)</name>
    <dbReference type="NCBI Taxonomy" id="204722"/>
    <lineage>
        <taxon>Bacteria</taxon>
        <taxon>Pseudomonadati</taxon>
        <taxon>Pseudomonadota</taxon>
        <taxon>Alphaproteobacteria</taxon>
        <taxon>Hyphomicrobiales</taxon>
        <taxon>Brucellaceae</taxon>
        <taxon>Brucella/Ochrobactrum group</taxon>
        <taxon>Brucella</taxon>
    </lineage>
</organism>
<name>PYRE_BRUSU</name>
<comment type="function">
    <text evidence="1">Catalyzes the transfer of a ribosyl phosphate group from 5-phosphoribose 1-diphosphate to orotate, leading to the formation of orotidine monophosphate (OMP).</text>
</comment>
<comment type="catalytic activity">
    <reaction evidence="1">
        <text>orotidine 5'-phosphate + diphosphate = orotate + 5-phospho-alpha-D-ribose 1-diphosphate</text>
        <dbReference type="Rhea" id="RHEA:10380"/>
        <dbReference type="ChEBI" id="CHEBI:30839"/>
        <dbReference type="ChEBI" id="CHEBI:33019"/>
        <dbReference type="ChEBI" id="CHEBI:57538"/>
        <dbReference type="ChEBI" id="CHEBI:58017"/>
        <dbReference type="EC" id="2.4.2.10"/>
    </reaction>
</comment>
<comment type="cofactor">
    <cofactor evidence="1">
        <name>Mg(2+)</name>
        <dbReference type="ChEBI" id="CHEBI:18420"/>
    </cofactor>
</comment>
<comment type="pathway">
    <text evidence="1">Pyrimidine metabolism; UMP biosynthesis via de novo pathway; UMP from orotate: step 1/2.</text>
</comment>
<comment type="subunit">
    <text evidence="1">Homodimer.</text>
</comment>
<comment type="similarity">
    <text evidence="1">Belongs to the purine/pyrimidine phosphoribosyltransferase family. PyrE subfamily.</text>
</comment>
<feature type="chain" id="PRO_0000110680" description="Orotate phosphoribosyltransferase">
    <location>
        <begin position="1"/>
        <end position="192"/>
    </location>
</feature>
<feature type="binding site" evidence="1">
    <location>
        <begin position="116"/>
        <end position="124"/>
    </location>
    <ligand>
        <name>5-phospho-alpha-D-ribose 1-diphosphate</name>
        <dbReference type="ChEBI" id="CHEBI:58017"/>
    </ligand>
</feature>
<feature type="binding site" evidence="1">
    <location>
        <position position="120"/>
    </location>
    <ligand>
        <name>orotate</name>
        <dbReference type="ChEBI" id="CHEBI:30839"/>
    </ligand>
</feature>
<feature type="binding site" evidence="1">
    <location>
        <position position="148"/>
    </location>
    <ligand>
        <name>orotate</name>
        <dbReference type="ChEBI" id="CHEBI:30839"/>
    </ligand>
</feature>
<dbReference type="EC" id="2.4.2.10" evidence="1"/>
<dbReference type="EMBL" id="AE014291">
    <property type="protein sequence ID" value="AAN29582.1"/>
    <property type="molecule type" value="Genomic_DNA"/>
</dbReference>
<dbReference type="EMBL" id="CP002997">
    <property type="protein sequence ID" value="AEM17999.1"/>
    <property type="molecule type" value="Genomic_DNA"/>
</dbReference>
<dbReference type="RefSeq" id="WP_002963797.1">
    <property type="nucleotide sequence ID" value="NZ_KN046804.1"/>
</dbReference>
<dbReference type="SMR" id="P65911"/>
<dbReference type="GeneID" id="97534018"/>
<dbReference type="KEGG" id="bms:BR0653"/>
<dbReference type="KEGG" id="bsi:BS1330_I0649"/>
<dbReference type="PATRIC" id="fig|204722.22.peg.1190"/>
<dbReference type="HOGENOM" id="CLU_074878_3_0_5"/>
<dbReference type="PhylomeDB" id="P65911"/>
<dbReference type="UniPathway" id="UPA00070">
    <property type="reaction ID" value="UER00119"/>
</dbReference>
<dbReference type="Proteomes" id="UP000007104">
    <property type="component" value="Chromosome I"/>
</dbReference>
<dbReference type="GO" id="GO:0000287">
    <property type="term" value="F:magnesium ion binding"/>
    <property type="evidence" value="ECO:0007669"/>
    <property type="project" value="UniProtKB-UniRule"/>
</dbReference>
<dbReference type="GO" id="GO:0004588">
    <property type="term" value="F:orotate phosphoribosyltransferase activity"/>
    <property type="evidence" value="ECO:0007669"/>
    <property type="project" value="UniProtKB-UniRule"/>
</dbReference>
<dbReference type="GO" id="GO:0044205">
    <property type="term" value="P:'de novo' UMP biosynthetic process"/>
    <property type="evidence" value="ECO:0007669"/>
    <property type="project" value="UniProtKB-UniRule"/>
</dbReference>
<dbReference type="GO" id="GO:0019856">
    <property type="term" value="P:pyrimidine nucleobase biosynthetic process"/>
    <property type="evidence" value="ECO:0007669"/>
    <property type="project" value="InterPro"/>
</dbReference>
<dbReference type="CDD" id="cd06223">
    <property type="entry name" value="PRTases_typeI"/>
    <property type="match status" value="1"/>
</dbReference>
<dbReference type="Gene3D" id="3.40.50.2020">
    <property type="match status" value="1"/>
</dbReference>
<dbReference type="HAMAP" id="MF_01208">
    <property type="entry name" value="PyrE"/>
    <property type="match status" value="1"/>
</dbReference>
<dbReference type="InterPro" id="IPR023031">
    <property type="entry name" value="OPRT"/>
</dbReference>
<dbReference type="InterPro" id="IPR006273">
    <property type="entry name" value="Orotate_PRibTrfase_bac"/>
</dbReference>
<dbReference type="InterPro" id="IPR000836">
    <property type="entry name" value="PRibTrfase_dom"/>
</dbReference>
<dbReference type="InterPro" id="IPR029057">
    <property type="entry name" value="PRTase-like"/>
</dbReference>
<dbReference type="NCBIfam" id="TIGR01367">
    <property type="entry name" value="pyrE_Therm"/>
    <property type="match status" value="1"/>
</dbReference>
<dbReference type="PANTHER" id="PTHR19278">
    <property type="entry name" value="OROTATE PHOSPHORIBOSYLTRANSFERASE"/>
    <property type="match status" value="1"/>
</dbReference>
<dbReference type="PANTHER" id="PTHR19278:SF9">
    <property type="entry name" value="URIDINE 5'-MONOPHOSPHATE SYNTHASE"/>
    <property type="match status" value="1"/>
</dbReference>
<dbReference type="Pfam" id="PF00156">
    <property type="entry name" value="Pribosyltran"/>
    <property type="match status" value="1"/>
</dbReference>
<dbReference type="SUPFAM" id="SSF53271">
    <property type="entry name" value="PRTase-like"/>
    <property type="match status" value="1"/>
</dbReference>
<dbReference type="PROSITE" id="PS00103">
    <property type="entry name" value="PUR_PYR_PR_TRANSFER"/>
    <property type="match status" value="1"/>
</dbReference>